<dbReference type="EMBL" id="M18638">
    <property type="protein sequence ID" value="AAA26975.1"/>
    <property type="molecule type" value="Genomic_DNA"/>
</dbReference>
<dbReference type="EMBL" id="AE014074">
    <property type="protein sequence ID" value="AAM78737.1"/>
    <property type="molecule type" value="Genomic_DNA"/>
</dbReference>
<dbReference type="PIR" id="A43507">
    <property type="entry name" value="A43507"/>
</dbReference>
<dbReference type="RefSeq" id="WP_010921831.1">
    <property type="nucleotide sequence ID" value="NC_004070.1"/>
</dbReference>
<dbReference type="SMR" id="P0DF96"/>
<dbReference type="KEGG" id="spg:SpyM3_0130"/>
<dbReference type="HOGENOM" id="CLU_026912_1_0_9"/>
<dbReference type="Proteomes" id="UP000000564">
    <property type="component" value="Chromosome"/>
</dbReference>
<dbReference type="GO" id="GO:0005576">
    <property type="term" value="C:extracellular region"/>
    <property type="evidence" value="ECO:0007669"/>
    <property type="project" value="UniProtKB-SubCell"/>
</dbReference>
<dbReference type="GO" id="GO:0020002">
    <property type="term" value="C:host cell plasma membrane"/>
    <property type="evidence" value="ECO:0007669"/>
    <property type="project" value="UniProtKB-SubCell"/>
</dbReference>
<dbReference type="GO" id="GO:0016020">
    <property type="term" value="C:membrane"/>
    <property type="evidence" value="ECO:0007669"/>
    <property type="project" value="UniProtKB-KW"/>
</dbReference>
<dbReference type="GO" id="GO:0015485">
    <property type="term" value="F:cholesterol binding"/>
    <property type="evidence" value="ECO:0007669"/>
    <property type="project" value="InterPro"/>
</dbReference>
<dbReference type="GO" id="GO:0090729">
    <property type="term" value="F:toxin activity"/>
    <property type="evidence" value="ECO:0007669"/>
    <property type="project" value="UniProtKB-KW"/>
</dbReference>
<dbReference type="GO" id="GO:0031640">
    <property type="term" value="P:killing of cells of another organism"/>
    <property type="evidence" value="ECO:0007669"/>
    <property type="project" value="UniProtKB-KW"/>
</dbReference>
<dbReference type="GO" id="GO:0033659">
    <property type="term" value="P:symbiont-mediated disruption of host mitochondrion"/>
    <property type="evidence" value="ECO:0000269"/>
    <property type="project" value="SigSci"/>
</dbReference>
<dbReference type="Gene3D" id="3.30.1040.20">
    <property type="match status" value="1"/>
</dbReference>
<dbReference type="Gene3D" id="3.40.30.40">
    <property type="entry name" value="Perfringolysin"/>
    <property type="match status" value="1"/>
</dbReference>
<dbReference type="Gene3D" id="2.60.40.1430">
    <property type="entry name" value="Perfringolysin, domain 4"/>
    <property type="match status" value="1"/>
</dbReference>
<dbReference type="Gene3D" id="3.90.840.10">
    <property type="entry name" value="Thiol-activated cytolysin superfamily/Thiol-activated cytolysin, alpha-beta domain"/>
    <property type="match status" value="1"/>
</dbReference>
<dbReference type="InterPro" id="IPR035390">
    <property type="entry name" value="Thiol_cytolys_C"/>
</dbReference>
<dbReference type="InterPro" id="IPR038700">
    <property type="entry name" value="Thiol_cytolys_C_sf"/>
</dbReference>
<dbReference type="InterPro" id="IPR001869">
    <property type="entry name" value="Thiol_cytolysin"/>
</dbReference>
<dbReference type="InterPro" id="IPR036363">
    <property type="entry name" value="Thiol_cytolysin_ab_sf"/>
</dbReference>
<dbReference type="InterPro" id="IPR036359">
    <property type="entry name" value="Thiol_cytolysin_sf"/>
</dbReference>
<dbReference type="Pfam" id="PF17440">
    <property type="entry name" value="Thiol_cytolys_C"/>
    <property type="match status" value="1"/>
</dbReference>
<dbReference type="Pfam" id="PF01289">
    <property type="entry name" value="Thiol_cytolysin"/>
    <property type="match status" value="1"/>
</dbReference>
<dbReference type="PRINTS" id="PR01400">
    <property type="entry name" value="TACYTOLYSIN"/>
</dbReference>
<dbReference type="SUPFAM" id="SSF56978">
    <property type="entry name" value="Perfringolysin"/>
    <property type="match status" value="1"/>
</dbReference>
<dbReference type="PROSITE" id="PS00481">
    <property type="entry name" value="THIOL_CYTOLYSINS"/>
    <property type="match status" value="1"/>
</dbReference>
<organism>
    <name type="scientific">Streptococcus pyogenes serotype M3 (strain ATCC BAA-595 / MGAS315)</name>
    <dbReference type="NCBI Taxonomy" id="198466"/>
    <lineage>
        <taxon>Bacteria</taxon>
        <taxon>Bacillati</taxon>
        <taxon>Bacillota</taxon>
        <taxon>Bacilli</taxon>
        <taxon>Lactobacillales</taxon>
        <taxon>Streptococcaceae</taxon>
        <taxon>Streptococcus</taxon>
    </lineage>
</organism>
<reference key="1">
    <citation type="journal article" date="1987" name="Infect. Immun.">
        <title>Nucleotide sequence of the streptolysin O (SLO) gene: structural homologies between SLO and other membrane-damaging, thiol-activated toxins.</title>
        <authorList>
            <person name="Kehoe M.A."/>
            <person name="Miller L."/>
            <person name="Walker J.A."/>
            <person name="Boulnois G.J."/>
        </authorList>
    </citation>
    <scope>NUCLEOTIDE SEQUENCE [GENOMIC DNA]</scope>
    <source>
        <strain>Richards / Serotype M3</strain>
    </source>
</reference>
<reference key="2">
    <citation type="journal article" date="2002" name="Proc. Natl. Acad. Sci. U.S.A.">
        <title>Genome sequence of a serotype M3 strain of group A Streptococcus: phage-encoded toxins, the high-virulence phenotype, and clone emergence.</title>
        <authorList>
            <person name="Beres S.B."/>
            <person name="Sylva G.L."/>
            <person name="Barbian K.D."/>
            <person name="Lei B."/>
            <person name="Hoff J.S."/>
            <person name="Mammarella N.D."/>
            <person name="Liu M.-Y."/>
            <person name="Smoot J.C."/>
            <person name="Porcella S.F."/>
            <person name="Parkins L.D."/>
            <person name="Campbell D.S."/>
            <person name="Smith T.M."/>
            <person name="McCormick J.K."/>
            <person name="Leung D.Y.M."/>
            <person name="Schlievert P.M."/>
            <person name="Musser J.M."/>
        </authorList>
    </citation>
    <scope>NUCLEOTIDE SEQUENCE [LARGE SCALE GENOMIC DNA]</scope>
    <source>
        <strain>ATCC BAA-595 / MGAS315</strain>
    </source>
</reference>
<reference key="3">
    <citation type="journal article" date="1989" name="Infect. Immun.">
        <title>The thiol-activated toxin streptolysin O does not require a thiol group for cytolytic activity.</title>
        <authorList>
            <person name="Pinkney M."/>
            <person name="Beachey E."/>
            <person name="Kehoe M."/>
        </authorList>
    </citation>
    <scope>MUTAGENESIS OF CYS-530</scope>
</reference>
<keyword id="KW-0204">Cytolysis</keyword>
<keyword id="KW-0354">Hemolysis</keyword>
<keyword id="KW-1032">Host cell membrane</keyword>
<keyword id="KW-1043">Host membrane</keyword>
<keyword id="KW-0446">Lipid-binding</keyword>
<keyword id="KW-0472">Membrane</keyword>
<keyword id="KW-0964">Secreted</keyword>
<keyword id="KW-0732">Signal</keyword>
<keyword id="KW-0800">Toxin</keyword>
<keyword id="KW-0812">Transmembrane</keyword>
<keyword id="KW-1134">Transmembrane beta strand</keyword>
<keyword id="KW-0843">Virulence</keyword>
<evidence type="ECO:0000250" key="1">
    <source>
        <dbReference type="UniProtKB" id="P0C2E9"/>
    </source>
</evidence>
<evidence type="ECO:0000250" key="2">
    <source>
        <dbReference type="UniProtKB" id="P0C2J9"/>
    </source>
</evidence>
<evidence type="ECO:0000250" key="3">
    <source>
        <dbReference type="UniProtKB" id="P13128"/>
    </source>
</evidence>
<evidence type="ECO:0000250" key="4">
    <source>
        <dbReference type="UniProtKB" id="Q04IN8"/>
    </source>
</evidence>
<evidence type="ECO:0000255" key="5"/>
<evidence type="ECO:0000256" key="6">
    <source>
        <dbReference type="SAM" id="MobiDB-lite"/>
    </source>
</evidence>
<evidence type="ECO:0000269" key="7">
    <source>
    </source>
</evidence>
<evidence type="ECO:0000305" key="8"/>
<sequence>MSNKKTFKKYSRVAGLLTAALIIGNLVTANAESNKQNTASTETTTTNEQPKPESSELTTEKAGQKTDDMLNSNDMIKLAPKEMPLESAEKEEKKSEDKKKSEEDHTEEINDKIYSLNYNELEVLAKNGETIENFVPKEGVKKADKFIVIERKKKNINTTPVDISIIDSVTDRTYPAALQLANKGFTENKPDAVVTKRNPQKIHIDLPGMGDKATVEVNDPTYANVSTAIDNLVNQWHDNYSGGNTLPARTQYTESMVYSKSQIEAALNVNSKILDGTLGIDFKSISKGEKKVMIAAYKQIFYTVSANLPNNPADVFDKSVTFKELQRKGVSNEAPPLFVSNVAYGRTVFVKLETSSKSNDVEAAFSAALKGTDVKTNGKYSDILENSSFTAVVLGGDAAEHNKVVTKDFDVIRNVIKDNATFSRKNPAYPISYTSVFLKNNKIAGVNNRTEYVETTSTEYTSGKINLSHQGAYVAQYEILWDEINYDDKGKEVITKRRWDNNWYSKTSPFSTVIPLGANSRNIRIMARECTGLAWEWWRKVIDERDVKLSKEINVNISGSTLSPYGSITYK</sequence>
<accession>P0DF96</accession>
<accession>P0A4L0</accession>
<accession>P21131</accession>
<gene>
    <name type="primary">slo</name>
    <name type="ordered locus">SpyM3_0130</name>
</gene>
<name>TACY_STRP3</name>
<comment type="function">
    <text evidence="3">A cholesterol-dependent toxin that causes cytolysis by forming pores in cholesterol containing host membranes. After binding to target membranes, the protein undergoes a major conformation change, leading to its insertion in the host membrane and formation of an oligomeric pore complex. Cholesterol is required for binding to host membranes, membrane insertion and pore formation; cholesterol binding is mediated by a Thr-Leu pair in the C-terminus. Can be reversibly inactivated by oxidation.</text>
</comment>
<comment type="subunit">
    <text evidence="4">Homooligomeric pore complex of 35 to 50 subunits; when inserted in the host membrane.</text>
</comment>
<comment type="subcellular location">
    <subcellularLocation>
        <location evidence="2">Secreted</location>
    </subcellularLocation>
    <subcellularLocation>
        <location evidence="3">Host cell membrane</location>
        <topology evidence="4">Multi-pass membrane protein</topology>
    </subcellularLocation>
    <text evidence="2 4">Probably secreted as soluble protein by the accessory Sec system (By similarity). It then inserts into the host cell membrane and forms pores formed by transmembrane beta-strands (By similarity).</text>
</comment>
<comment type="similarity">
    <text evidence="8">Belongs to the cholesterol-dependent cytolysin family.</text>
</comment>
<proteinExistence type="evidence at protein level"/>
<feature type="signal peptide" evidence="5">
    <location>
        <begin position="1"/>
        <end position="33"/>
    </location>
</feature>
<feature type="chain" id="PRO_0000034108" description="Streptolysin O">
    <location>
        <begin position="34"/>
        <end position="571"/>
    </location>
</feature>
<feature type="transmembrane region" description="Beta stranded" evidence="4">
    <location>
        <begin position="260"/>
        <end position="273"/>
    </location>
</feature>
<feature type="transmembrane region" description="Beta stranded" evidence="4">
    <location>
        <begin position="280"/>
        <end position="289"/>
    </location>
</feature>
<feature type="transmembrane region" description="Beta stranded" evidence="4">
    <location>
        <begin position="358"/>
        <end position="367"/>
    </location>
</feature>
<feature type="transmembrane region" description="Beta stranded" evidence="4">
    <location>
        <begin position="375"/>
        <end position="387"/>
    </location>
</feature>
<feature type="region of interest" description="Disordered" evidence="6">
    <location>
        <begin position="30"/>
        <end position="108"/>
    </location>
</feature>
<feature type="short sequence motif" description="Conserved undecapeptide" evidence="8">
    <location>
        <begin position="529"/>
        <end position="539"/>
    </location>
</feature>
<feature type="short sequence motif" description="Cholesterol binding" evidence="1">
    <location>
        <begin position="561"/>
        <end position="562"/>
    </location>
</feature>
<feature type="compositionally biased region" description="Low complexity" evidence="6">
    <location>
        <begin position="37"/>
        <end position="48"/>
    </location>
</feature>
<feature type="compositionally biased region" description="Basic and acidic residues" evidence="6">
    <location>
        <begin position="50"/>
        <end position="68"/>
    </location>
</feature>
<feature type="compositionally biased region" description="Basic and acidic residues" evidence="6">
    <location>
        <begin position="79"/>
        <end position="108"/>
    </location>
</feature>
<feature type="mutagenesis site" description="No loss of hemolytic activity." evidence="7">
    <original>C</original>
    <variation>A</variation>
    <variation>S</variation>
    <location>
        <position position="530"/>
    </location>
</feature>
<protein>
    <recommendedName>
        <fullName>Streptolysin O</fullName>
        <shortName>SLO</shortName>
    </recommendedName>
    <alternativeName>
        <fullName>Thiol-activated cytolysin</fullName>
    </alternativeName>
</protein>